<name>O164_CONAE</name>
<accession>Q9BP92</accession>
<comment type="subcellular location">
    <subcellularLocation>
        <location evidence="1">Secreted</location>
    </subcellularLocation>
</comment>
<comment type="tissue specificity">
    <text>Expressed by the venom duct.</text>
</comment>
<comment type="domain">
    <text evidence="1">The presence of a 'disulfide through disulfide knot' structurally defines this protein as a knottin.</text>
</comment>
<comment type="domain">
    <text>The cysteine framework is VI/VII (C-C-CC-C-C).</text>
</comment>
<comment type="similarity">
    <text evidence="3">Belongs to the conotoxin O1 superfamily.</text>
</comment>
<feature type="signal peptide" evidence="2">
    <location>
        <begin position="1"/>
        <end position="22"/>
    </location>
</feature>
<feature type="propeptide" id="PRO_0000404768" evidence="1">
    <location>
        <begin position="23"/>
        <end position="44"/>
    </location>
</feature>
<feature type="peptide" id="PRO_0000404769" description="Conotoxin ArMKLT2-0122">
    <location>
        <begin position="45"/>
        <end position="77"/>
    </location>
</feature>
<feature type="disulfide bond" evidence="1">
    <location>
        <begin position="50"/>
        <end position="65"/>
    </location>
</feature>
<feature type="disulfide bond" evidence="1">
    <location>
        <begin position="57"/>
        <end position="68"/>
    </location>
</feature>
<feature type="disulfide bond" evidence="1">
    <location>
        <begin position="64"/>
        <end position="73"/>
    </location>
</feature>
<dbReference type="EMBL" id="AF215046">
    <property type="protein sequence ID" value="AAG60474.1"/>
    <property type="molecule type" value="mRNA"/>
</dbReference>
<dbReference type="SMR" id="Q9BP92"/>
<dbReference type="ConoServer" id="733">
    <property type="toxin name" value="Ar6.4 precursor"/>
</dbReference>
<dbReference type="GO" id="GO:0005576">
    <property type="term" value="C:extracellular region"/>
    <property type="evidence" value="ECO:0007669"/>
    <property type="project" value="UniProtKB-SubCell"/>
</dbReference>
<dbReference type="GO" id="GO:0008200">
    <property type="term" value="F:ion channel inhibitor activity"/>
    <property type="evidence" value="ECO:0007669"/>
    <property type="project" value="InterPro"/>
</dbReference>
<dbReference type="GO" id="GO:0090729">
    <property type="term" value="F:toxin activity"/>
    <property type="evidence" value="ECO:0007669"/>
    <property type="project" value="UniProtKB-KW"/>
</dbReference>
<dbReference type="InterPro" id="IPR004214">
    <property type="entry name" value="Conotoxin"/>
</dbReference>
<dbReference type="Pfam" id="PF02950">
    <property type="entry name" value="Conotoxin"/>
    <property type="match status" value="1"/>
</dbReference>
<evidence type="ECO:0000250" key="1"/>
<evidence type="ECO:0000255" key="2"/>
<evidence type="ECO:0000305" key="3"/>
<protein>
    <recommendedName>
        <fullName>Conotoxin ArMKLT2-0122</fullName>
    </recommendedName>
</protein>
<reference key="1">
    <citation type="journal article" date="2001" name="Mol. Biol. Evol.">
        <title>Mechanisms for evolving hypervariability: the case of conopeptides.</title>
        <authorList>
            <person name="Conticello S.G."/>
            <person name="Gilad Y."/>
            <person name="Avidan N."/>
            <person name="Ben-Asher E."/>
            <person name="Levy Z."/>
            <person name="Fainzilber M."/>
        </authorList>
    </citation>
    <scope>NUCLEOTIDE SEQUENCE [MRNA]</scope>
    <source>
        <tissue>Venom duct</tissue>
    </source>
</reference>
<keyword id="KW-1015">Disulfide bond</keyword>
<keyword id="KW-0960">Knottin</keyword>
<keyword id="KW-0528">Neurotoxin</keyword>
<keyword id="KW-0964">Secreted</keyword>
<keyword id="KW-0732">Signal</keyword>
<keyword id="KW-0800">Toxin</keyword>
<organism>
    <name type="scientific">Conus arenatus</name>
    <name type="common">Sand-dusted cone</name>
    <dbReference type="NCBI Taxonomy" id="89451"/>
    <lineage>
        <taxon>Eukaryota</taxon>
        <taxon>Metazoa</taxon>
        <taxon>Spiralia</taxon>
        <taxon>Lophotrochozoa</taxon>
        <taxon>Mollusca</taxon>
        <taxon>Gastropoda</taxon>
        <taxon>Caenogastropoda</taxon>
        <taxon>Neogastropoda</taxon>
        <taxon>Conoidea</taxon>
        <taxon>Conidae</taxon>
        <taxon>Conus</taxon>
    </lineage>
</organism>
<sequence>MKLTCVLIVAVLFLTACQLIAADDSRDLKRFSRRKMRDGMLNTKNTEEGCLPPLSLCTMADDECCHDCILFLCLVSP</sequence>
<proteinExistence type="evidence at transcript level"/>